<keyword id="KW-0963">Cytoplasm</keyword>
<keyword id="KW-0255">Endonuclease</keyword>
<keyword id="KW-0378">Hydrolase</keyword>
<keyword id="KW-0464">Manganese</keyword>
<keyword id="KW-0479">Metal-binding</keyword>
<keyword id="KW-0540">Nuclease</keyword>
<feature type="chain" id="PRO_1000031222" description="Ribonuclease HII">
    <location>
        <begin position="1"/>
        <end position="198"/>
    </location>
</feature>
<feature type="domain" description="RNase H type-2" evidence="2">
    <location>
        <begin position="11"/>
        <end position="198"/>
    </location>
</feature>
<feature type="binding site" evidence="1">
    <location>
        <position position="17"/>
    </location>
    <ligand>
        <name>a divalent metal cation</name>
        <dbReference type="ChEBI" id="CHEBI:60240"/>
    </ligand>
</feature>
<feature type="binding site" evidence="1">
    <location>
        <position position="18"/>
    </location>
    <ligand>
        <name>a divalent metal cation</name>
        <dbReference type="ChEBI" id="CHEBI:60240"/>
    </ligand>
</feature>
<feature type="binding site" evidence="1">
    <location>
        <position position="109"/>
    </location>
    <ligand>
        <name>a divalent metal cation</name>
        <dbReference type="ChEBI" id="CHEBI:60240"/>
    </ligand>
</feature>
<proteinExistence type="inferred from homology"/>
<dbReference type="EC" id="3.1.26.4" evidence="1"/>
<dbReference type="EMBL" id="CP000308">
    <property type="protein sequence ID" value="ABG12502.1"/>
    <property type="molecule type" value="Genomic_DNA"/>
</dbReference>
<dbReference type="RefSeq" id="WP_002212145.1">
    <property type="nucleotide sequence ID" value="NZ_CP009906.1"/>
</dbReference>
<dbReference type="SMR" id="Q1CAM0"/>
<dbReference type="GeneID" id="57977503"/>
<dbReference type="KEGG" id="ypa:YPA_0534"/>
<dbReference type="Proteomes" id="UP000001971">
    <property type="component" value="Chromosome"/>
</dbReference>
<dbReference type="GO" id="GO:0005737">
    <property type="term" value="C:cytoplasm"/>
    <property type="evidence" value="ECO:0007669"/>
    <property type="project" value="UniProtKB-SubCell"/>
</dbReference>
<dbReference type="GO" id="GO:0032299">
    <property type="term" value="C:ribonuclease H2 complex"/>
    <property type="evidence" value="ECO:0007669"/>
    <property type="project" value="TreeGrafter"/>
</dbReference>
<dbReference type="GO" id="GO:0030145">
    <property type="term" value="F:manganese ion binding"/>
    <property type="evidence" value="ECO:0007669"/>
    <property type="project" value="UniProtKB-UniRule"/>
</dbReference>
<dbReference type="GO" id="GO:0003723">
    <property type="term" value="F:RNA binding"/>
    <property type="evidence" value="ECO:0007669"/>
    <property type="project" value="InterPro"/>
</dbReference>
<dbReference type="GO" id="GO:0004523">
    <property type="term" value="F:RNA-DNA hybrid ribonuclease activity"/>
    <property type="evidence" value="ECO:0007669"/>
    <property type="project" value="UniProtKB-UniRule"/>
</dbReference>
<dbReference type="GO" id="GO:0043137">
    <property type="term" value="P:DNA replication, removal of RNA primer"/>
    <property type="evidence" value="ECO:0007669"/>
    <property type="project" value="TreeGrafter"/>
</dbReference>
<dbReference type="GO" id="GO:0006298">
    <property type="term" value="P:mismatch repair"/>
    <property type="evidence" value="ECO:0007669"/>
    <property type="project" value="TreeGrafter"/>
</dbReference>
<dbReference type="CDD" id="cd07182">
    <property type="entry name" value="RNase_HII_bacteria_HII_like"/>
    <property type="match status" value="1"/>
</dbReference>
<dbReference type="FunFam" id="3.30.420.10:FF:000006">
    <property type="entry name" value="Ribonuclease HII"/>
    <property type="match status" value="1"/>
</dbReference>
<dbReference type="Gene3D" id="3.30.420.10">
    <property type="entry name" value="Ribonuclease H-like superfamily/Ribonuclease H"/>
    <property type="match status" value="1"/>
</dbReference>
<dbReference type="HAMAP" id="MF_00052_B">
    <property type="entry name" value="RNase_HII_B"/>
    <property type="match status" value="1"/>
</dbReference>
<dbReference type="InterPro" id="IPR022898">
    <property type="entry name" value="RNase_HII"/>
</dbReference>
<dbReference type="InterPro" id="IPR001352">
    <property type="entry name" value="RNase_HII/HIII"/>
</dbReference>
<dbReference type="InterPro" id="IPR024567">
    <property type="entry name" value="RNase_HII/HIII_dom"/>
</dbReference>
<dbReference type="InterPro" id="IPR012337">
    <property type="entry name" value="RNaseH-like_sf"/>
</dbReference>
<dbReference type="InterPro" id="IPR036397">
    <property type="entry name" value="RNaseH_sf"/>
</dbReference>
<dbReference type="NCBIfam" id="NF000594">
    <property type="entry name" value="PRK00015.1-1"/>
    <property type="match status" value="1"/>
</dbReference>
<dbReference type="NCBIfam" id="NF000595">
    <property type="entry name" value="PRK00015.1-3"/>
    <property type="match status" value="1"/>
</dbReference>
<dbReference type="NCBIfam" id="NF000596">
    <property type="entry name" value="PRK00015.1-4"/>
    <property type="match status" value="1"/>
</dbReference>
<dbReference type="PANTHER" id="PTHR10954">
    <property type="entry name" value="RIBONUCLEASE H2 SUBUNIT A"/>
    <property type="match status" value="1"/>
</dbReference>
<dbReference type="PANTHER" id="PTHR10954:SF18">
    <property type="entry name" value="RIBONUCLEASE HII"/>
    <property type="match status" value="1"/>
</dbReference>
<dbReference type="Pfam" id="PF01351">
    <property type="entry name" value="RNase_HII"/>
    <property type="match status" value="1"/>
</dbReference>
<dbReference type="SUPFAM" id="SSF53098">
    <property type="entry name" value="Ribonuclease H-like"/>
    <property type="match status" value="1"/>
</dbReference>
<dbReference type="PROSITE" id="PS51975">
    <property type="entry name" value="RNASE_H_2"/>
    <property type="match status" value="1"/>
</dbReference>
<accession>Q1CAM0</accession>
<sequence>MSETFIYPQANLIAGVDEVGRGPLVGAVVTAAVILDPNRPIVGLADSKKLSEKRRLSLYDEITEKALSWSLGRAEPEEIDQLNILHATMLAMQRAVSGLHIVPDYVLIDGNRCPKLQMPSLAVVKGDSRVAEISAASILAKVTRDREMTELDLLFPEYGFAQHKGYPTAFHLEKLAALGATVHHRRSFGPVKRVLGLV</sequence>
<reference key="1">
    <citation type="journal article" date="2006" name="J. Bacteriol.">
        <title>Complete genome sequence of Yersinia pestis strains Antiqua and Nepal516: evidence of gene reduction in an emerging pathogen.</title>
        <authorList>
            <person name="Chain P.S.G."/>
            <person name="Hu P."/>
            <person name="Malfatti S.A."/>
            <person name="Radnedge L."/>
            <person name="Larimer F."/>
            <person name="Vergez L.M."/>
            <person name="Worsham P."/>
            <person name="Chu M.C."/>
            <person name="Andersen G.L."/>
        </authorList>
    </citation>
    <scope>NUCLEOTIDE SEQUENCE [LARGE SCALE GENOMIC DNA]</scope>
    <source>
        <strain>Antiqua</strain>
    </source>
</reference>
<protein>
    <recommendedName>
        <fullName evidence="1">Ribonuclease HII</fullName>
        <shortName evidence="1">RNase HII</shortName>
        <ecNumber evidence="1">3.1.26.4</ecNumber>
    </recommendedName>
</protein>
<name>RNH2_YERPA</name>
<gene>
    <name evidence="1" type="primary">rnhB</name>
    <name type="ordered locus">YPA_0534</name>
</gene>
<comment type="function">
    <text evidence="1">Endonuclease that specifically degrades the RNA of RNA-DNA hybrids.</text>
</comment>
<comment type="catalytic activity">
    <reaction evidence="1">
        <text>Endonucleolytic cleavage to 5'-phosphomonoester.</text>
        <dbReference type="EC" id="3.1.26.4"/>
    </reaction>
</comment>
<comment type="cofactor">
    <cofactor evidence="1">
        <name>Mn(2+)</name>
        <dbReference type="ChEBI" id="CHEBI:29035"/>
    </cofactor>
    <cofactor evidence="1">
        <name>Mg(2+)</name>
        <dbReference type="ChEBI" id="CHEBI:18420"/>
    </cofactor>
    <text evidence="1">Manganese or magnesium. Binds 1 divalent metal ion per monomer in the absence of substrate. May bind a second metal ion after substrate binding.</text>
</comment>
<comment type="subcellular location">
    <subcellularLocation>
        <location evidence="1">Cytoplasm</location>
    </subcellularLocation>
</comment>
<comment type="similarity">
    <text evidence="1">Belongs to the RNase HII family.</text>
</comment>
<organism>
    <name type="scientific">Yersinia pestis bv. Antiqua (strain Antiqua)</name>
    <dbReference type="NCBI Taxonomy" id="360102"/>
    <lineage>
        <taxon>Bacteria</taxon>
        <taxon>Pseudomonadati</taxon>
        <taxon>Pseudomonadota</taxon>
        <taxon>Gammaproteobacteria</taxon>
        <taxon>Enterobacterales</taxon>
        <taxon>Yersiniaceae</taxon>
        <taxon>Yersinia</taxon>
    </lineage>
</organism>
<evidence type="ECO:0000255" key="1">
    <source>
        <dbReference type="HAMAP-Rule" id="MF_00052"/>
    </source>
</evidence>
<evidence type="ECO:0000255" key="2">
    <source>
        <dbReference type="PROSITE-ProRule" id="PRU01319"/>
    </source>
</evidence>